<reference key="1">
    <citation type="journal article" date="1997" name="J. Bacteriol.">
        <title>A new Bacillus subtilis gene, med, encodes a positive regulator of comK.</title>
        <authorList>
            <person name="Ogura M."/>
            <person name="Ohshiro Y."/>
            <person name="Hirao S."/>
            <person name="Tanaka T."/>
        </authorList>
    </citation>
    <scope>NUCLEOTIDE SEQUENCE [GENOMIC DNA]</scope>
    <source>
        <strain>168 / CU741</strain>
    </source>
</reference>
<reference key="2">
    <citation type="journal article" date="1997" name="Nature">
        <title>The complete genome sequence of the Gram-positive bacterium Bacillus subtilis.</title>
        <authorList>
            <person name="Kunst F."/>
            <person name="Ogasawara N."/>
            <person name="Moszer I."/>
            <person name="Albertini A.M."/>
            <person name="Alloni G."/>
            <person name="Azevedo V."/>
            <person name="Bertero M.G."/>
            <person name="Bessieres P."/>
            <person name="Bolotin A."/>
            <person name="Borchert S."/>
            <person name="Borriss R."/>
            <person name="Boursier L."/>
            <person name="Brans A."/>
            <person name="Braun M."/>
            <person name="Brignell S.C."/>
            <person name="Bron S."/>
            <person name="Brouillet S."/>
            <person name="Bruschi C.V."/>
            <person name="Caldwell B."/>
            <person name="Capuano V."/>
            <person name="Carter N.M."/>
            <person name="Choi S.-K."/>
            <person name="Codani J.-J."/>
            <person name="Connerton I.F."/>
            <person name="Cummings N.J."/>
            <person name="Daniel R.A."/>
            <person name="Denizot F."/>
            <person name="Devine K.M."/>
            <person name="Duesterhoeft A."/>
            <person name="Ehrlich S.D."/>
            <person name="Emmerson P.T."/>
            <person name="Entian K.-D."/>
            <person name="Errington J."/>
            <person name="Fabret C."/>
            <person name="Ferrari E."/>
            <person name="Foulger D."/>
            <person name="Fritz C."/>
            <person name="Fujita M."/>
            <person name="Fujita Y."/>
            <person name="Fuma S."/>
            <person name="Galizzi A."/>
            <person name="Galleron N."/>
            <person name="Ghim S.-Y."/>
            <person name="Glaser P."/>
            <person name="Goffeau A."/>
            <person name="Golightly E.J."/>
            <person name="Grandi G."/>
            <person name="Guiseppi G."/>
            <person name="Guy B.J."/>
            <person name="Haga K."/>
            <person name="Haiech J."/>
            <person name="Harwood C.R."/>
            <person name="Henaut A."/>
            <person name="Hilbert H."/>
            <person name="Holsappel S."/>
            <person name="Hosono S."/>
            <person name="Hullo M.-F."/>
            <person name="Itaya M."/>
            <person name="Jones L.-M."/>
            <person name="Joris B."/>
            <person name="Karamata D."/>
            <person name="Kasahara Y."/>
            <person name="Klaerr-Blanchard M."/>
            <person name="Klein C."/>
            <person name="Kobayashi Y."/>
            <person name="Koetter P."/>
            <person name="Koningstein G."/>
            <person name="Krogh S."/>
            <person name="Kumano M."/>
            <person name="Kurita K."/>
            <person name="Lapidus A."/>
            <person name="Lardinois S."/>
            <person name="Lauber J."/>
            <person name="Lazarevic V."/>
            <person name="Lee S.-M."/>
            <person name="Levine A."/>
            <person name="Liu H."/>
            <person name="Masuda S."/>
            <person name="Mauel C."/>
            <person name="Medigue C."/>
            <person name="Medina N."/>
            <person name="Mellado R.P."/>
            <person name="Mizuno M."/>
            <person name="Moestl D."/>
            <person name="Nakai S."/>
            <person name="Noback M."/>
            <person name="Noone D."/>
            <person name="O'Reilly M."/>
            <person name="Ogawa K."/>
            <person name="Ogiwara A."/>
            <person name="Oudega B."/>
            <person name="Park S.-H."/>
            <person name="Parro V."/>
            <person name="Pohl T.M."/>
            <person name="Portetelle D."/>
            <person name="Porwollik S."/>
            <person name="Prescott A.M."/>
            <person name="Presecan E."/>
            <person name="Pujic P."/>
            <person name="Purnelle B."/>
            <person name="Rapoport G."/>
            <person name="Rey M."/>
            <person name="Reynolds S."/>
            <person name="Rieger M."/>
            <person name="Rivolta C."/>
            <person name="Rocha E."/>
            <person name="Roche B."/>
            <person name="Rose M."/>
            <person name="Sadaie Y."/>
            <person name="Sato T."/>
            <person name="Scanlan E."/>
            <person name="Schleich S."/>
            <person name="Schroeter R."/>
            <person name="Scoffone F."/>
            <person name="Sekiguchi J."/>
            <person name="Sekowska A."/>
            <person name="Seror S.J."/>
            <person name="Serror P."/>
            <person name="Shin B.-S."/>
            <person name="Soldo B."/>
            <person name="Sorokin A."/>
            <person name="Tacconi E."/>
            <person name="Takagi T."/>
            <person name="Takahashi H."/>
            <person name="Takemaru K."/>
            <person name="Takeuchi M."/>
            <person name="Tamakoshi A."/>
            <person name="Tanaka T."/>
            <person name="Terpstra P."/>
            <person name="Tognoni A."/>
            <person name="Tosato V."/>
            <person name="Uchiyama S."/>
            <person name="Vandenbol M."/>
            <person name="Vannier F."/>
            <person name="Vassarotti A."/>
            <person name="Viari A."/>
            <person name="Wambutt R."/>
            <person name="Wedler E."/>
            <person name="Wedler H."/>
            <person name="Weitzenegger T."/>
            <person name="Winters P."/>
            <person name="Wipat A."/>
            <person name="Yamamoto H."/>
            <person name="Yamane K."/>
            <person name="Yasumoto K."/>
            <person name="Yata K."/>
            <person name="Yoshida K."/>
            <person name="Yoshikawa H.-F."/>
            <person name="Zumstein E."/>
            <person name="Yoshikawa H."/>
            <person name="Danchin A."/>
        </authorList>
    </citation>
    <scope>NUCLEOTIDE SEQUENCE [LARGE SCALE GENOMIC DNA]</scope>
    <source>
        <strain>168</strain>
    </source>
</reference>
<protein>
    <recommendedName>
        <fullName>Transcriptional activator protein med</fullName>
    </recommendedName>
</protein>
<evidence type="ECO:0000255" key="1">
    <source>
        <dbReference type="PROSITE-ProRule" id="PRU00303"/>
    </source>
</evidence>
<evidence type="ECO:0000305" key="2"/>
<proteinExistence type="inferred from homology"/>
<dbReference type="EMBL" id="D86376">
    <property type="protein sequence ID" value="BAA22928.1"/>
    <property type="molecule type" value="Genomic_DNA"/>
</dbReference>
<dbReference type="EMBL" id="AL009126">
    <property type="protein sequence ID" value="CAB12971.2"/>
    <property type="molecule type" value="Genomic_DNA"/>
</dbReference>
<dbReference type="PIR" id="D69656">
    <property type="entry name" value="D69656"/>
</dbReference>
<dbReference type="RefSeq" id="NP_389012.2">
    <property type="nucleotide sequence ID" value="NC_000964.3"/>
</dbReference>
<dbReference type="RefSeq" id="WP_003245494.1">
    <property type="nucleotide sequence ID" value="NZ_OZ025638.1"/>
</dbReference>
<dbReference type="SMR" id="O32436"/>
<dbReference type="FunCoup" id="O32436">
    <property type="interactions" value="6"/>
</dbReference>
<dbReference type="STRING" id="224308.BSU11300"/>
<dbReference type="PaxDb" id="224308-BSU11300"/>
<dbReference type="EnsemblBacteria" id="CAB12971">
    <property type="protein sequence ID" value="CAB12971"/>
    <property type="gene ID" value="BSU_11300"/>
</dbReference>
<dbReference type="GeneID" id="936388"/>
<dbReference type="KEGG" id="bsu:BSU11300"/>
<dbReference type="PATRIC" id="fig|224308.179.peg.1215"/>
<dbReference type="eggNOG" id="COG1744">
    <property type="taxonomic scope" value="Bacteria"/>
</dbReference>
<dbReference type="InParanoid" id="O32436"/>
<dbReference type="OrthoDB" id="2556857at2"/>
<dbReference type="PhylomeDB" id="O32436"/>
<dbReference type="BioCyc" id="BSUB:BSU11300-MONOMER"/>
<dbReference type="Proteomes" id="UP000001570">
    <property type="component" value="Chromosome"/>
</dbReference>
<dbReference type="GO" id="GO:0005886">
    <property type="term" value="C:plasma membrane"/>
    <property type="evidence" value="ECO:0007669"/>
    <property type="project" value="UniProtKB-SubCell"/>
</dbReference>
<dbReference type="CDD" id="cd06353">
    <property type="entry name" value="PBP1_Med-like"/>
    <property type="match status" value="1"/>
</dbReference>
<dbReference type="Gene3D" id="3.40.50.2300">
    <property type="match status" value="2"/>
</dbReference>
<dbReference type="InterPro" id="IPR050957">
    <property type="entry name" value="BMP_lipoprotein"/>
</dbReference>
<dbReference type="InterPro" id="IPR028082">
    <property type="entry name" value="Peripla_BP_I"/>
</dbReference>
<dbReference type="InterPro" id="IPR003760">
    <property type="entry name" value="PnrA-like"/>
</dbReference>
<dbReference type="PANTHER" id="PTHR34296:SF2">
    <property type="entry name" value="ABC TRANSPORTER GUANOSINE-BINDING PROTEIN NUPN"/>
    <property type="match status" value="1"/>
</dbReference>
<dbReference type="PANTHER" id="PTHR34296">
    <property type="entry name" value="TRANSCRIPTIONAL ACTIVATOR PROTEIN MED"/>
    <property type="match status" value="1"/>
</dbReference>
<dbReference type="Pfam" id="PF02608">
    <property type="entry name" value="Bmp"/>
    <property type="match status" value="1"/>
</dbReference>
<dbReference type="SUPFAM" id="SSF53822">
    <property type="entry name" value="Periplasmic binding protein-like I"/>
    <property type="match status" value="1"/>
</dbReference>
<dbReference type="PROSITE" id="PS51257">
    <property type="entry name" value="PROKAR_LIPOPROTEIN"/>
    <property type="match status" value="1"/>
</dbReference>
<organism>
    <name type="scientific">Bacillus subtilis (strain 168)</name>
    <dbReference type="NCBI Taxonomy" id="224308"/>
    <lineage>
        <taxon>Bacteria</taxon>
        <taxon>Bacillati</taxon>
        <taxon>Bacillota</taxon>
        <taxon>Bacilli</taxon>
        <taxon>Bacillales</taxon>
        <taxon>Bacillaceae</taxon>
        <taxon>Bacillus</taxon>
    </lineage>
</organism>
<gene>
    <name type="primary">med</name>
    <name type="ordered locus">BSU11300</name>
</gene>
<sequence length="317" mass="35311">MITRLVMIFSVLLLLSGCGQTPFKGKIEKVGMLFPDTINDLVWGTKGYKGLLNIQSKYNVDVYYKEGVKTEEDIINAIEDFHKRGVNLLYGHGSEYAEVFNLVGEDYPDMEFVISNAKAKADNVTSVHFSGEAMGFFGGMTAAHMSKTNQVGVIASFTWQPEVDGFIKGAKYENPDIEVNTKYTDHWDDDTTAVKLYQKMKNEGADVVYPAGDGYNVPVIQQIKKDGLYAIGYVTDQSDLGENTVLTSTVQNVDKAYEIIAEQFNKGTLEGGDHYYDLNTGVVEMGTFSPLVDQDFQQRIAKLIKTYNKTGELPKNE</sequence>
<name>MED_BACSU</name>
<feature type="signal peptide" evidence="1">
    <location>
        <begin position="1"/>
        <end position="17"/>
    </location>
</feature>
<feature type="chain" id="PRO_0000018009" description="Transcriptional activator protein med">
    <location>
        <begin position="18"/>
        <end position="317"/>
    </location>
</feature>
<feature type="lipid moiety-binding region" description="N-palmitoyl cysteine" evidence="1">
    <location>
        <position position="18"/>
    </location>
</feature>
<feature type="lipid moiety-binding region" description="S-diacylglycerol cysteine" evidence="1">
    <location>
        <position position="18"/>
    </location>
</feature>
<keyword id="KW-0010">Activator</keyword>
<keyword id="KW-1003">Cell membrane</keyword>
<keyword id="KW-0449">Lipoprotein</keyword>
<keyword id="KW-0472">Membrane</keyword>
<keyword id="KW-0564">Palmitate</keyword>
<keyword id="KW-1185">Reference proteome</keyword>
<keyword id="KW-0732">Signal</keyword>
<keyword id="KW-0804">Transcription</keyword>
<keyword id="KW-0805">Transcription regulation</keyword>
<accession>O32436</accession>
<comment type="function">
    <text>Positive activator of the comK gene.</text>
</comment>
<comment type="subcellular location">
    <subcellularLocation>
        <location evidence="2">Cell membrane</location>
        <topology evidence="2">Lipid-anchor</topology>
    </subcellularLocation>
</comment>
<comment type="similarity">
    <text evidence="2">Belongs to the BMP lipoprotein family.</text>
</comment>